<accession>Q1AU38</accession>
<comment type="function">
    <text evidence="1">One of the primary rRNA binding proteins, it binds specifically to the 5'-end of 16S ribosomal RNA.</text>
</comment>
<comment type="subunit">
    <text evidence="1">Part of the 30S ribosomal subunit.</text>
</comment>
<comment type="similarity">
    <text evidence="1">Belongs to the universal ribosomal protein uS17 family.</text>
</comment>
<keyword id="KW-1185">Reference proteome</keyword>
<keyword id="KW-0687">Ribonucleoprotein</keyword>
<keyword id="KW-0689">Ribosomal protein</keyword>
<keyword id="KW-0694">RNA-binding</keyword>
<keyword id="KW-0699">rRNA-binding</keyword>
<protein>
    <recommendedName>
        <fullName evidence="1">Small ribosomal subunit protein uS17</fullName>
    </recommendedName>
    <alternativeName>
        <fullName evidence="3">30S ribosomal protein S17</fullName>
    </alternativeName>
</protein>
<reference key="1">
    <citation type="submission" date="2006-06" db="EMBL/GenBank/DDBJ databases">
        <title>Complete sequence of Rubrobacter xylanophilus DSM 9941.</title>
        <authorList>
            <consortium name="US DOE Joint Genome Institute"/>
            <person name="Copeland A."/>
            <person name="Lucas S."/>
            <person name="Lapidus A."/>
            <person name="Barry K."/>
            <person name="Detter J.C."/>
            <person name="Glavina del Rio T."/>
            <person name="Hammon N."/>
            <person name="Israni S."/>
            <person name="Dalin E."/>
            <person name="Tice H."/>
            <person name="Pitluck S."/>
            <person name="Munk A.C."/>
            <person name="Brettin T."/>
            <person name="Bruce D."/>
            <person name="Han C."/>
            <person name="Tapia R."/>
            <person name="Gilna P."/>
            <person name="Schmutz J."/>
            <person name="Larimer F."/>
            <person name="Land M."/>
            <person name="Hauser L."/>
            <person name="Kyrpides N."/>
            <person name="Lykidis A."/>
            <person name="da Costa M.S."/>
            <person name="Rainey F.A."/>
            <person name="Empadinhas N."/>
            <person name="Jolivet E."/>
            <person name="Battista J.R."/>
            <person name="Richardson P."/>
        </authorList>
    </citation>
    <scope>NUCLEOTIDE SEQUENCE [LARGE SCALE GENOMIC DNA]</scope>
    <source>
        <strain>DSM 9941 / JCM 11954 / NBRC 16129 / PRD-1</strain>
    </source>
</reference>
<sequence length="138" mass="15707">MSEEERNRGAEPEERAEALADTGDLPESEVAGDLGEAAQRGPAFDRDAGKVQKDTRRGRRKERVGLVVSDAADKTVTVSVETLKEHPMYKKRIRRSKKFLVHDERNEARVGDTVRIIETRPLSRRKRWRLASIISRAE</sequence>
<organism>
    <name type="scientific">Rubrobacter xylanophilus (strain DSM 9941 / JCM 11954 / NBRC 16129 / PRD-1)</name>
    <dbReference type="NCBI Taxonomy" id="266117"/>
    <lineage>
        <taxon>Bacteria</taxon>
        <taxon>Bacillati</taxon>
        <taxon>Actinomycetota</taxon>
        <taxon>Rubrobacteria</taxon>
        <taxon>Rubrobacterales</taxon>
        <taxon>Rubrobacteraceae</taxon>
        <taxon>Rubrobacter</taxon>
    </lineage>
</organism>
<dbReference type="EMBL" id="CP000386">
    <property type="protein sequence ID" value="ABG05090.1"/>
    <property type="molecule type" value="Genomic_DNA"/>
</dbReference>
<dbReference type="SMR" id="Q1AU38"/>
<dbReference type="STRING" id="266117.Rxyl_2146"/>
<dbReference type="KEGG" id="rxy:Rxyl_2146"/>
<dbReference type="eggNOG" id="COG0186">
    <property type="taxonomic scope" value="Bacteria"/>
</dbReference>
<dbReference type="HOGENOM" id="CLU_1853742_0_0_11"/>
<dbReference type="PhylomeDB" id="Q1AU38"/>
<dbReference type="Proteomes" id="UP000006637">
    <property type="component" value="Chromosome"/>
</dbReference>
<dbReference type="GO" id="GO:0022627">
    <property type="term" value="C:cytosolic small ribosomal subunit"/>
    <property type="evidence" value="ECO:0007669"/>
    <property type="project" value="TreeGrafter"/>
</dbReference>
<dbReference type="GO" id="GO:0019843">
    <property type="term" value="F:rRNA binding"/>
    <property type="evidence" value="ECO:0007669"/>
    <property type="project" value="UniProtKB-UniRule"/>
</dbReference>
<dbReference type="GO" id="GO:0003735">
    <property type="term" value="F:structural constituent of ribosome"/>
    <property type="evidence" value="ECO:0007669"/>
    <property type="project" value="InterPro"/>
</dbReference>
<dbReference type="GO" id="GO:0006412">
    <property type="term" value="P:translation"/>
    <property type="evidence" value="ECO:0007669"/>
    <property type="project" value="UniProtKB-UniRule"/>
</dbReference>
<dbReference type="CDD" id="cd00364">
    <property type="entry name" value="Ribosomal_uS17"/>
    <property type="match status" value="1"/>
</dbReference>
<dbReference type="Gene3D" id="2.40.50.140">
    <property type="entry name" value="Nucleic acid-binding proteins"/>
    <property type="match status" value="1"/>
</dbReference>
<dbReference type="HAMAP" id="MF_01345_B">
    <property type="entry name" value="Ribosomal_uS17_B"/>
    <property type="match status" value="1"/>
</dbReference>
<dbReference type="InterPro" id="IPR012340">
    <property type="entry name" value="NA-bd_OB-fold"/>
</dbReference>
<dbReference type="InterPro" id="IPR000266">
    <property type="entry name" value="Ribosomal_uS17"/>
</dbReference>
<dbReference type="InterPro" id="IPR019984">
    <property type="entry name" value="Ribosomal_uS17_bact/chlr"/>
</dbReference>
<dbReference type="InterPro" id="IPR019979">
    <property type="entry name" value="Ribosomal_uS17_CS"/>
</dbReference>
<dbReference type="NCBIfam" id="NF004123">
    <property type="entry name" value="PRK05610.1"/>
    <property type="match status" value="1"/>
</dbReference>
<dbReference type="NCBIfam" id="TIGR03635">
    <property type="entry name" value="uS17_bact"/>
    <property type="match status" value="1"/>
</dbReference>
<dbReference type="PANTHER" id="PTHR10744">
    <property type="entry name" value="40S RIBOSOMAL PROTEIN S11 FAMILY MEMBER"/>
    <property type="match status" value="1"/>
</dbReference>
<dbReference type="PANTHER" id="PTHR10744:SF1">
    <property type="entry name" value="SMALL RIBOSOMAL SUBUNIT PROTEIN US17M"/>
    <property type="match status" value="1"/>
</dbReference>
<dbReference type="Pfam" id="PF00366">
    <property type="entry name" value="Ribosomal_S17"/>
    <property type="match status" value="1"/>
</dbReference>
<dbReference type="PRINTS" id="PR00973">
    <property type="entry name" value="RIBOSOMALS17"/>
</dbReference>
<dbReference type="SUPFAM" id="SSF50249">
    <property type="entry name" value="Nucleic acid-binding proteins"/>
    <property type="match status" value="1"/>
</dbReference>
<dbReference type="PROSITE" id="PS00056">
    <property type="entry name" value="RIBOSOMAL_S17"/>
    <property type="match status" value="1"/>
</dbReference>
<proteinExistence type="inferred from homology"/>
<gene>
    <name evidence="1" type="primary">rpsQ</name>
    <name type="ordered locus">Rxyl_2146</name>
</gene>
<name>RS17_RUBXD</name>
<evidence type="ECO:0000255" key="1">
    <source>
        <dbReference type="HAMAP-Rule" id="MF_01345"/>
    </source>
</evidence>
<evidence type="ECO:0000256" key="2">
    <source>
        <dbReference type="SAM" id="MobiDB-lite"/>
    </source>
</evidence>
<evidence type="ECO:0000305" key="3"/>
<feature type="chain" id="PRO_0000255699" description="Small ribosomal subunit protein uS17">
    <location>
        <begin position="1"/>
        <end position="138"/>
    </location>
</feature>
<feature type="region of interest" description="Disordered" evidence="2">
    <location>
        <begin position="1"/>
        <end position="62"/>
    </location>
</feature>
<feature type="compositionally biased region" description="Basic and acidic residues" evidence="2">
    <location>
        <begin position="1"/>
        <end position="18"/>
    </location>
</feature>
<feature type="compositionally biased region" description="Basic and acidic residues" evidence="2">
    <location>
        <begin position="43"/>
        <end position="55"/>
    </location>
</feature>